<reference key="1">
    <citation type="journal article" date="2001" name="Nature">
        <title>Massive gene decay in the leprosy bacillus.</title>
        <authorList>
            <person name="Cole S.T."/>
            <person name="Eiglmeier K."/>
            <person name="Parkhill J."/>
            <person name="James K.D."/>
            <person name="Thomson N.R."/>
            <person name="Wheeler P.R."/>
            <person name="Honore N."/>
            <person name="Garnier T."/>
            <person name="Churcher C.M."/>
            <person name="Harris D.E."/>
            <person name="Mungall K.L."/>
            <person name="Basham D."/>
            <person name="Brown D."/>
            <person name="Chillingworth T."/>
            <person name="Connor R."/>
            <person name="Davies R.M."/>
            <person name="Devlin K."/>
            <person name="Duthoy S."/>
            <person name="Feltwell T."/>
            <person name="Fraser A."/>
            <person name="Hamlin N."/>
            <person name="Holroyd S."/>
            <person name="Hornsby T."/>
            <person name="Jagels K."/>
            <person name="Lacroix C."/>
            <person name="Maclean J."/>
            <person name="Moule S."/>
            <person name="Murphy L.D."/>
            <person name="Oliver K."/>
            <person name="Quail M.A."/>
            <person name="Rajandream M.A."/>
            <person name="Rutherford K.M."/>
            <person name="Rutter S."/>
            <person name="Seeger K."/>
            <person name="Simon S."/>
            <person name="Simmonds M."/>
            <person name="Skelton J."/>
            <person name="Squares R."/>
            <person name="Squares S."/>
            <person name="Stevens K."/>
            <person name="Taylor K."/>
            <person name="Whitehead S."/>
            <person name="Woodward J.R."/>
            <person name="Barrell B.G."/>
        </authorList>
    </citation>
    <scope>NUCLEOTIDE SEQUENCE [LARGE SCALE GENOMIC DNA]</scope>
    <source>
        <strain>TN</strain>
    </source>
</reference>
<evidence type="ECO:0000250" key="1"/>
<evidence type="ECO:0000305" key="2"/>
<sequence>MEFAPVSPPDGHAAAAARARQDTLTKPRGALGRLEDLSIWVASCQGQCPPRQFQRARIVVFAGDHGVARSGVSAYPPQLTAQMVANIDRGGAAINALASIADATIRIADLAVDADPLSQQIGIHKVRRGSGDIAIQDALTEDETARAIIAGQRIADEEVDRGADLLIAGDIGIGNTTAAAVLVAALTNAEPVAVVGFGTGIDDASWARKTAAVRDALCRIRLVLPDPVGLLRCCGGADLAAMAGFCAQAAVRRTPLLLDGMVVTAAALVAERLAPGSWQWWQAGHQSTEPGHALALAALDLDPILDLRMRLGEGTGATAALLVLRAAVAALTSMTTFAEAGVAGTSTSPPS</sequence>
<name>COBT_MYCLE</name>
<protein>
    <recommendedName>
        <fullName>Nicotinate-nucleotide--dimethylbenzimidazole phosphoribosyltransferase</fullName>
        <shortName>NN:DBI PRT</shortName>
        <ecNumber>2.4.2.21</ecNumber>
    </recommendedName>
    <alternativeName>
        <fullName>N(1)-alpha-phosphoribosyltransferase</fullName>
    </alternativeName>
</protein>
<feature type="chain" id="PRO_0000167055" description="Nicotinate-nucleotide--dimethylbenzimidazole phosphoribosyltransferase">
    <location>
        <begin position="1"/>
        <end position="351"/>
    </location>
</feature>
<feature type="active site" description="Proton acceptor" evidence="1">
    <location>
        <position position="313"/>
    </location>
</feature>
<organism>
    <name type="scientific">Mycobacterium leprae (strain TN)</name>
    <dbReference type="NCBI Taxonomy" id="272631"/>
    <lineage>
        <taxon>Bacteria</taxon>
        <taxon>Bacillati</taxon>
        <taxon>Actinomycetota</taxon>
        <taxon>Actinomycetes</taxon>
        <taxon>Mycobacteriales</taxon>
        <taxon>Mycobacteriaceae</taxon>
        <taxon>Mycobacterium</taxon>
    </lineage>
</organism>
<dbReference type="EC" id="2.4.2.21"/>
<dbReference type="EMBL" id="Z98741">
    <property type="protein sequence ID" value="CAB11373.1"/>
    <property type="molecule type" value="Genomic_DNA"/>
</dbReference>
<dbReference type="EMBL" id="AL583920">
    <property type="protein sequence ID" value="CAC31249.1"/>
    <property type="molecule type" value="Genomic_DNA"/>
</dbReference>
<dbReference type="PIR" id="T44886">
    <property type="entry name" value="T44886"/>
</dbReference>
<dbReference type="RefSeq" id="NP_301655.1">
    <property type="nucleotide sequence ID" value="NC_002677.1"/>
</dbReference>
<dbReference type="SMR" id="O32953"/>
<dbReference type="STRING" id="272631.gene:17574694"/>
<dbReference type="KEGG" id="mle:ML0868"/>
<dbReference type="PATRIC" id="fig|272631.5.peg.1597"/>
<dbReference type="Leproma" id="ML0868"/>
<dbReference type="eggNOG" id="COG2038">
    <property type="taxonomic scope" value="Bacteria"/>
</dbReference>
<dbReference type="HOGENOM" id="CLU_002982_0_2_11"/>
<dbReference type="OrthoDB" id="9781491at2"/>
<dbReference type="UniPathway" id="UPA00061">
    <property type="reaction ID" value="UER00516"/>
</dbReference>
<dbReference type="Proteomes" id="UP000000806">
    <property type="component" value="Chromosome"/>
</dbReference>
<dbReference type="GO" id="GO:0008939">
    <property type="term" value="F:nicotinate-nucleotide-dimethylbenzimidazole phosphoribosyltransferase activity"/>
    <property type="evidence" value="ECO:0007669"/>
    <property type="project" value="UniProtKB-UniRule"/>
</dbReference>
<dbReference type="GO" id="GO:0009236">
    <property type="term" value="P:cobalamin biosynthetic process"/>
    <property type="evidence" value="ECO:0007669"/>
    <property type="project" value="UniProtKB-KW"/>
</dbReference>
<dbReference type="CDD" id="cd02439">
    <property type="entry name" value="DMB-PRT_CobT"/>
    <property type="match status" value="1"/>
</dbReference>
<dbReference type="Gene3D" id="1.10.1610.10">
    <property type="match status" value="1"/>
</dbReference>
<dbReference type="Gene3D" id="3.40.50.10210">
    <property type="match status" value="1"/>
</dbReference>
<dbReference type="HAMAP" id="MF_00230">
    <property type="entry name" value="CobT"/>
    <property type="match status" value="1"/>
</dbReference>
<dbReference type="InterPro" id="IPR003200">
    <property type="entry name" value="Nict_dMeBzImd_PRibTrfase"/>
</dbReference>
<dbReference type="InterPro" id="IPR017846">
    <property type="entry name" value="Nict_dMeBzImd_PRibTrfase_bact"/>
</dbReference>
<dbReference type="InterPro" id="IPR023195">
    <property type="entry name" value="Nict_dMeBzImd_PRibTrfase_N"/>
</dbReference>
<dbReference type="InterPro" id="IPR036087">
    <property type="entry name" value="Nict_dMeBzImd_PRibTrfase_sf"/>
</dbReference>
<dbReference type="NCBIfam" id="TIGR03160">
    <property type="entry name" value="cobT_DBIPRT"/>
    <property type="match status" value="1"/>
</dbReference>
<dbReference type="NCBIfam" id="NF000996">
    <property type="entry name" value="PRK00105.1"/>
    <property type="match status" value="1"/>
</dbReference>
<dbReference type="PANTHER" id="PTHR43463">
    <property type="entry name" value="NICOTINATE-NUCLEOTIDE--DIMETHYLBENZIMIDAZOLE PHOSPHORIBOSYLTRANSFERASE"/>
    <property type="match status" value="1"/>
</dbReference>
<dbReference type="PANTHER" id="PTHR43463:SF1">
    <property type="entry name" value="NICOTINATE-NUCLEOTIDE--DIMETHYLBENZIMIDAZOLE PHOSPHORIBOSYLTRANSFERASE"/>
    <property type="match status" value="1"/>
</dbReference>
<dbReference type="Pfam" id="PF02277">
    <property type="entry name" value="DBI_PRT"/>
    <property type="match status" value="1"/>
</dbReference>
<dbReference type="SUPFAM" id="SSF52733">
    <property type="entry name" value="Nicotinate mononucleotide:5,6-dimethylbenzimidazole phosphoribosyltransferase (CobT)"/>
    <property type="match status" value="1"/>
</dbReference>
<proteinExistence type="inferred from homology"/>
<gene>
    <name type="primary">cobT</name>
    <name type="ordered locus">ML0868</name>
    <name type="ORF">MLCB22.08</name>
</gene>
<comment type="function">
    <text evidence="1">Catalyzes the synthesis of alpha-ribazole-5'-phosphate from nicotinate mononucleotide (NAMN) and 5,6-dimethylbenzimidazole (DMB).</text>
</comment>
<comment type="catalytic activity">
    <reaction>
        <text>5,6-dimethylbenzimidazole + nicotinate beta-D-ribonucleotide = alpha-ribazole 5'-phosphate + nicotinate + H(+)</text>
        <dbReference type="Rhea" id="RHEA:11196"/>
        <dbReference type="ChEBI" id="CHEBI:15378"/>
        <dbReference type="ChEBI" id="CHEBI:15890"/>
        <dbReference type="ChEBI" id="CHEBI:32544"/>
        <dbReference type="ChEBI" id="CHEBI:57502"/>
        <dbReference type="ChEBI" id="CHEBI:57918"/>
        <dbReference type="EC" id="2.4.2.21"/>
    </reaction>
</comment>
<comment type="pathway">
    <text>Nucleoside biosynthesis; alpha-ribazole biosynthesis; alpha-ribazole from 5,6-dimethylbenzimidazole: step 1/2.</text>
</comment>
<comment type="similarity">
    <text evidence="2">Belongs to the CobT family.</text>
</comment>
<keyword id="KW-0169">Cobalamin biosynthesis</keyword>
<keyword id="KW-0328">Glycosyltransferase</keyword>
<keyword id="KW-1185">Reference proteome</keyword>
<keyword id="KW-0808">Transferase</keyword>
<accession>O32953</accession>